<dbReference type="EMBL" id="CP001138">
    <property type="protein sequence ID" value="ACH49079.1"/>
    <property type="molecule type" value="Genomic_DNA"/>
</dbReference>
<dbReference type="RefSeq" id="WP_000516126.1">
    <property type="nucleotide sequence ID" value="NC_011149.1"/>
</dbReference>
<dbReference type="SMR" id="B5F6Y8"/>
<dbReference type="GeneID" id="66754552"/>
<dbReference type="KEGG" id="sea:SeAg_B0013"/>
<dbReference type="HOGENOM" id="CLU_005965_2_1_6"/>
<dbReference type="Proteomes" id="UP000008819">
    <property type="component" value="Chromosome"/>
</dbReference>
<dbReference type="GO" id="GO:0005524">
    <property type="term" value="F:ATP binding"/>
    <property type="evidence" value="ECO:0007669"/>
    <property type="project" value="UniProtKB-UniRule"/>
</dbReference>
<dbReference type="GO" id="GO:0140662">
    <property type="term" value="F:ATP-dependent protein folding chaperone"/>
    <property type="evidence" value="ECO:0007669"/>
    <property type="project" value="InterPro"/>
</dbReference>
<dbReference type="GO" id="GO:0051082">
    <property type="term" value="F:unfolded protein binding"/>
    <property type="evidence" value="ECO:0007669"/>
    <property type="project" value="InterPro"/>
</dbReference>
<dbReference type="CDD" id="cd10234">
    <property type="entry name" value="ASKHA_NBD_HSP70_DnaK-like"/>
    <property type="match status" value="1"/>
</dbReference>
<dbReference type="FunFam" id="2.60.34.10:FF:000014">
    <property type="entry name" value="Chaperone protein DnaK HSP70"/>
    <property type="match status" value="1"/>
</dbReference>
<dbReference type="FunFam" id="1.20.1270.10:FF:000001">
    <property type="entry name" value="Molecular chaperone DnaK"/>
    <property type="match status" value="1"/>
</dbReference>
<dbReference type="FunFam" id="3.30.420.40:FF:000004">
    <property type="entry name" value="Molecular chaperone DnaK"/>
    <property type="match status" value="1"/>
</dbReference>
<dbReference type="FunFam" id="3.90.640.10:FF:000003">
    <property type="entry name" value="Molecular chaperone DnaK"/>
    <property type="match status" value="1"/>
</dbReference>
<dbReference type="Gene3D" id="1.20.1270.10">
    <property type="match status" value="1"/>
</dbReference>
<dbReference type="Gene3D" id="3.30.420.40">
    <property type="match status" value="2"/>
</dbReference>
<dbReference type="Gene3D" id="3.90.640.10">
    <property type="entry name" value="Actin, Chain A, domain 4"/>
    <property type="match status" value="1"/>
</dbReference>
<dbReference type="Gene3D" id="2.60.34.10">
    <property type="entry name" value="Substrate Binding Domain Of DNAk, Chain A, domain 1"/>
    <property type="match status" value="1"/>
</dbReference>
<dbReference type="HAMAP" id="MF_00332">
    <property type="entry name" value="DnaK"/>
    <property type="match status" value="1"/>
</dbReference>
<dbReference type="InterPro" id="IPR043129">
    <property type="entry name" value="ATPase_NBD"/>
</dbReference>
<dbReference type="InterPro" id="IPR012725">
    <property type="entry name" value="Chaperone_DnaK"/>
</dbReference>
<dbReference type="InterPro" id="IPR018181">
    <property type="entry name" value="Heat_shock_70_CS"/>
</dbReference>
<dbReference type="InterPro" id="IPR029048">
    <property type="entry name" value="HSP70_C_sf"/>
</dbReference>
<dbReference type="InterPro" id="IPR029047">
    <property type="entry name" value="HSP70_peptide-bd_sf"/>
</dbReference>
<dbReference type="InterPro" id="IPR013126">
    <property type="entry name" value="Hsp_70_fam"/>
</dbReference>
<dbReference type="NCBIfam" id="NF001413">
    <property type="entry name" value="PRK00290.1"/>
    <property type="match status" value="1"/>
</dbReference>
<dbReference type="NCBIfam" id="NF003520">
    <property type="entry name" value="PRK05183.1"/>
    <property type="match status" value="1"/>
</dbReference>
<dbReference type="NCBIfam" id="TIGR02350">
    <property type="entry name" value="prok_dnaK"/>
    <property type="match status" value="1"/>
</dbReference>
<dbReference type="PANTHER" id="PTHR19375">
    <property type="entry name" value="HEAT SHOCK PROTEIN 70KDA"/>
    <property type="match status" value="1"/>
</dbReference>
<dbReference type="Pfam" id="PF00012">
    <property type="entry name" value="HSP70"/>
    <property type="match status" value="1"/>
</dbReference>
<dbReference type="PRINTS" id="PR00301">
    <property type="entry name" value="HEATSHOCK70"/>
</dbReference>
<dbReference type="SUPFAM" id="SSF53067">
    <property type="entry name" value="Actin-like ATPase domain"/>
    <property type="match status" value="2"/>
</dbReference>
<dbReference type="SUPFAM" id="SSF100934">
    <property type="entry name" value="Heat shock protein 70kD (HSP70), C-terminal subdomain"/>
    <property type="match status" value="1"/>
</dbReference>
<dbReference type="SUPFAM" id="SSF100920">
    <property type="entry name" value="Heat shock protein 70kD (HSP70), peptide-binding domain"/>
    <property type="match status" value="1"/>
</dbReference>
<dbReference type="PROSITE" id="PS00297">
    <property type="entry name" value="HSP70_1"/>
    <property type="match status" value="1"/>
</dbReference>
<dbReference type="PROSITE" id="PS00329">
    <property type="entry name" value="HSP70_2"/>
    <property type="match status" value="1"/>
</dbReference>
<dbReference type="PROSITE" id="PS01036">
    <property type="entry name" value="HSP70_3"/>
    <property type="match status" value="1"/>
</dbReference>
<sequence length="638" mass="69231">MGKIIGIDLGTTNSCVAIMDGTQARVLENAEGDRTTPSIIAYTQDGETLVGQPAKRQAVTNPQNTLFAIKRLIGRRFQDEEVQRDVSIMPYKIIGADNGDAWLDVKGQKMAPPQISAEVLKKMKKTAEDYLGEPVTEAVITVPAYFNDAQRQATKDAGRIAGLEVKRIINEPTAAALAYGLDKEVGNRTIAVYDLGGGTFDISIIEIDEVDGEKTFEVLATNGDTHLGGEDFDTRLINYLVDEFKKDQGIDLRNDPLAMQRLKEAAEKAKIELSSAQQTDVNLPYITADATGPKHMNIKVTRAKLESLVEDLVNRSIEPLKVALQDAGLSVSDINDVILVGGQTRMPMVQKKVAEFFGKEPRKDVNPDEAVAIGAAVQGGVLTGDVKDVLLLDVTPLSLGIETMGGVMTPLITKNTTIPTKHSQVFSTAEDNQSAVTIHVLQGERKRASDNKSLGQFNLDGINPAPRGMPQIEVTFDIDADGILHVSAKDKNSGKEQKITIKASSGLNEEEIQKMVRDAEANAESDRKFEELVQTRNQGDHLLHSTRKQVEEAGDKLPADDKTAIESALSALETALKGEDKAAIEAKMQELAQVSQKLMEIAQQQHAQQQAGSADASANNAKDDDVVDAEFEEVKDKK</sequence>
<name>DNAK_SALA4</name>
<organism>
    <name type="scientific">Salmonella agona (strain SL483)</name>
    <dbReference type="NCBI Taxonomy" id="454166"/>
    <lineage>
        <taxon>Bacteria</taxon>
        <taxon>Pseudomonadati</taxon>
        <taxon>Pseudomonadota</taxon>
        <taxon>Gammaproteobacteria</taxon>
        <taxon>Enterobacterales</taxon>
        <taxon>Enterobacteriaceae</taxon>
        <taxon>Salmonella</taxon>
    </lineage>
</organism>
<protein>
    <recommendedName>
        <fullName evidence="1">Chaperone protein DnaK</fullName>
    </recommendedName>
    <alternativeName>
        <fullName evidence="1">HSP70</fullName>
    </alternativeName>
    <alternativeName>
        <fullName evidence="1">Heat shock 70 kDa protein</fullName>
    </alternativeName>
    <alternativeName>
        <fullName evidence="1">Heat shock protein 70</fullName>
    </alternativeName>
</protein>
<gene>
    <name evidence="1" type="primary">dnaK</name>
    <name type="ordered locus">SeAg_B0013</name>
</gene>
<proteinExistence type="inferred from homology"/>
<feature type="chain" id="PRO_1000119749" description="Chaperone protein DnaK">
    <location>
        <begin position="1"/>
        <end position="638"/>
    </location>
</feature>
<feature type="region of interest" description="Disordered" evidence="2">
    <location>
        <begin position="603"/>
        <end position="638"/>
    </location>
</feature>
<feature type="compositionally biased region" description="Low complexity" evidence="2">
    <location>
        <begin position="603"/>
        <end position="620"/>
    </location>
</feature>
<feature type="modified residue" description="Phosphothreonine; by autocatalysis" evidence="1">
    <location>
        <position position="199"/>
    </location>
</feature>
<accession>B5F6Y8</accession>
<comment type="function">
    <text evidence="1">Acts as a chaperone.</text>
</comment>
<comment type="induction">
    <text evidence="1">By stress conditions e.g. heat shock.</text>
</comment>
<comment type="similarity">
    <text evidence="1">Belongs to the heat shock protein 70 family.</text>
</comment>
<reference key="1">
    <citation type="journal article" date="2011" name="J. Bacteriol.">
        <title>Comparative genomics of 28 Salmonella enterica isolates: evidence for CRISPR-mediated adaptive sublineage evolution.</title>
        <authorList>
            <person name="Fricke W.F."/>
            <person name="Mammel M.K."/>
            <person name="McDermott P.F."/>
            <person name="Tartera C."/>
            <person name="White D.G."/>
            <person name="Leclerc J.E."/>
            <person name="Ravel J."/>
            <person name="Cebula T.A."/>
        </authorList>
    </citation>
    <scope>NUCLEOTIDE SEQUENCE [LARGE SCALE GENOMIC DNA]</scope>
    <source>
        <strain>SL483</strain>
    </source>
</reference>
<keyword id="KW-0067">ATP-binding</keyword>
<keyword id="KW-0143">Chaperone</keyword>
<keyword id="KW-0547">Nucleotide-binding</keyword>
<keyword id="KW-0597">Phosphoprotein</keyword>
<keyword id="KW-0346">Stress response</keyword>
<evidence type="ECO:0000255" key="1">
    <source>
        <dbReference type="HAMAP-Rule" id="MF_00332"/>
    </source>
</evidence>
<evidence type="ECO:0000256" key="2">
    <source>
        <dbReference type="SAM" id="MobiDB-lite"/>
    </source>
</evidence>